<evidence type="ECO:0000255" key="1">
    <source>
        <dbReference type="PROSITE-ProRule" id="PRU00238"/>
    </source>
</evidence>
<name>HBAD_SPHPU</name>
<reference key="1">
    <citation type="journal article" date="1988" name="Biol. Chem. Hoppe-Seyler">
        <title>Primary structure of the hemoglobins from Sphenodon (Sphenodon punctatus, Tuatara, Rynchocephalia). Evidence for the expression of alpha D-gene.</title>
        <authorList>
            <person name="Abbasi A."/>
            <person name="Wells R.M.G."/>
            <person name="Brittain T."/>
            <person name="Braunitzer G."/>
        </authorList>
    </citation>
    <scope>PROTEIN SEQUENCE</scope>
</reference>
<dbReference type="PIR" id="S01137">
    <property type="entry name" value="HATJD"/>
</dbReference>
<dbReference type="SMR" id="P10062"/>
<dbReference type="Proteomes" id="UP000694392">
    <property type="component" value="Unplaced"/>
</dbReference>
<dbReference type="GO" id="GO:0072562">
    <property type="term" value="C:blood microparticle"/>
    <property type="evidence" value="ECO:0007669"/>
    <property type="project" value="TreeGrafter"/>
</dbReference>
<dbReference type="GO" id="GO:0031838">
    <property type="term" value="C:haptoglobin-hemoglobin complex"/>
    <property type="evidence" value="ECO:0007669"/>
    <property type="project" value="TreeGrafter"/>
</dbReference>
<dbReference type="GO" id="GO:0005833">
    <property type="term" value="C:hemoglobin complex"/>
    <property type="evidence" value="ECO:0007669"/>
    <property type="project" value="InterPro"/>
</dbReference>
<dbReference type="GO" id="GO:0031720">
    <property type="term" value="F:haptoglobin binding"/>
    <property type="evidence" value="ECO:0007669"/>
    <property type="project" value="TreeGrafter"/>
</dbReference>
<dbReference type="GO" id="GO:0020037">
    <property type="term" value="F:heme binding"/>
    <property type="evidence" value="ECO:0007669"/>
    <property type="project" value="InterPro"/>
</dbReference>
<dbReference type="GO" id="GO:0046872">
    <property type="term" value="F:metal ion binding"/>
    <property type="evidence" value="ECO:0007669"/>
    <property type="project" value="UniProtKB-KW"/>
</dbReference>
<dbReference type="GO" id="GO:0043177">
    <property type="term" value="F:organic acid binding"/>
    <property type="evidence" value="ECO:0007669"/>
    <property type="project" value="TreeGrafter"/>
</dbReference>
<dbReference type="GO" id="GO:0019825">
    <property type="term" value="F:oxygen binding"/>
    <property type="evidence" value="ECO:0007669"/>
    <property type="project" value="InterPro"/>
</dbReference>
<dbReference type="GO" id="GO:0005344">
    <property type="term" value="F:oxygen carrier activity"/>
    <property type="evidence" value="ECO:0007669"/>
    <property type="project" value="UniProtKB-KW"/>
</dbReference>
<dbReference type="GO" id="GO:0004601">
    <property type="term" value="F:peroxidase activity"/>
    <property type="evidence" value="ECO:0007669"/>
    <property type="project" value="TreeGrafter"/>
</dbReference>
<dbReference type="GO" id="GO:0042744">
    <property type="term" value="P:hydrogen peroxide catabolic process"/>
    <property type="evidence" value="ECO:0007669"/>
    <property type="project" value="TreeGrafter"/>
</dbReference>
<dbReference type="CDD" id="cd08927">
    <property type="entry name" value="Hb-alpha-like"/>
    <property type="match status" value="1"/>
</dbReference>
<dbReference type="FunFam" id="1.10.490.10:FF:000002">
    <property type="entry name" value="Hemoglobin subunit alpha"/>
    <property type="match status" value="1"/>
</dbReference>
<dbReference type="Gene3D" id="1.10.490.10">
    <property type="entry name" value="Globins"/>
    <property type="match status" value="1"/>
</dbReference>
<dbReference type="InterPro" id="IPR000971">
    <property type="entry name" value="Globin"/>
</dbReference>
<dbReference type="InterPro" id="IPR009050">
    <property type="entry name" value="Globin-like_sf"/>
</dbReference>
<dbReference type="InterPro" id="IPR012292">
    <property type="entry name" value="Globin/Proto"/>
</dbReference>
<dbReference type="InterPro" id="IPR002338">
    <property type="entry name" value="Hemoglobin_a-typ"/>
</dbReference>
<dbReference type="InterPro" id="IPR050056">
    <property type="entry name" value="Hemoglobin_oxygen_transport"/>
</dbReference>
<dbReference type="PANTHER" id="PTHR11442">
    <property type="entry name" value="HEMOGLOBIN FAMILY MEMBER"/>
    <property type="match status" value="1"/>
</dbReference>
<dbReference type="PANTHER" id="PTHR11442:SF41">
    <property type="entry name" value="HEMOGLOBIN SUBUNIT ZETA"/>
    <property type="match status" value="1"/>
</dbReference>
<dbReference type="Pfam" id="PF00042">
    <property type="entry name" value="Globin"/>
    <property type="match status" value="1"/>
</dbReference>
<dbReference type="PRINTS" id="PR00612">
    <property type="entry name" value="ALPHAHAEM"/>
</dbReference>
<dbReference type="SUPFAM" id="SSF46458">
    <property type="entry name" value="Globin-like"/>
    <property type="match status" value="1"/>
</dbReference>
<dbReference type="PROSITE" id="PS01033">
    <property type="entry name" value="GLOBIN"/>
    <property type="match status" value="1"/>
</dbReference>
<accession>P10062</accession>
<gene>
    <name type="primary">HBAD</name>
</gene>
<comment type="function">
    <text>Involved in oxygen transport from the lung to the various peripheral tissues.</text>
</comment>
<comment type="subunit">
    <text>There are three forms of hemoglobin in Sphenodon: A, A' and D. Hb A is a tetramer of two alpha-A and two beta-1, Hb A' is a tetramer of two alpha-a and two beta-2, Hb D is a tetramer of two alpha-D and two beta-2.</text>
</comment>
<comment type="tissue specificity">
    <text>Red blood cells.</text>
</comment>
<comment type="miscellaneous">
    <text>Sphenodon Hbs have properties not found in other reptiles: poor cooperativity, high affinity for oxygen, small Bohr and haldane effects, appreciable phosphate effects (those properties are also found in the Hbs of primitive urodele and caecilian amphibians).</text>
</comment>
<comment type="similarity">
    <text evidence="1">Belongs to the globin family.</text>
</comment>
<proteinExistence type="evidence at protein level"/>
<protein>
    <recommendedName>
        <fullName>Hemoglobin subunit alpha-D</fullName>
    </recommendedName>
    <alternativeName>
        <fullName>Alpha-D-globin</fullName>
    </alternativeName>
    <alternativeName>
        <fullName>Hemoglobin alpha-D chain</fullName>
    </alternativeName>
</protein>
<keyword id="KW-0903">Direct protein sequencing</keyword>
<keyword id="KW-0349">Heme</keyword>
<keyword id="KW-0408">Iron</keyword>
<keyword id="KW-0479">Metal-binding</keyword>
<keyword id="KW-0561">Oxygen transport</keyword>
<keyword id="KW-1185">Reference proteome</keyword>
<keyword id="KW-0813">Transport</keyword>
<feature type="chain" id="PRO_0000052839" description="Hemoglobin subunit alpha-D">
    <location>
        <begin position="1"/>
        <end position="141"/>
    </location>
</feature>
<feature type="domain" description="Globin" evidence="1">
    <location>
        <begin position="1"/>
        <end position="141"/>
    </location>
</feature>
<feature type="binding site" description="distal binding residue">
    <location>
        <position position="58"/>
    </location>
    <ligand>
        <name>heme b</name>
        <dbReference type="ChEBI" id="CHEBI:60344"/>
    </ligand>
    <ligandPart>
        <name>Fe</name>
        <dbReference type="ChEBI" id="CHEBI:18248"/>
    </ligandPart>
</feature>
<feature type="binding site" description="proximal binding residue">
    <location>
        <position position="87"/>
    </location>
    <ligand>
        <name>heme b</name>
        <dbReference type="ChEBI" id="CHEBI:60344"/>
    </ligand>
    <ligandPart>
        <name>Fe</name>
        <dbReference type="ChEBI" id="CHEBI:18248"/>
    </ligandPart>
</feature>
<organism>
    <name type="scientific">Sphenodon punctatus</name>
    <name type="common">Tuatara</name>
    <name type="synonym">Hatteria punctata</name>
    <dbReference type="NCBI Taxonomy" id="8508"/>
    <lineage>
        <taxon>Eukaryota</taxon>
        <taxon>Metazoa</taxon>
        <taxon>Chordata</taxon>
        <taxon>Craniata</taxon>
        <taxon>Vertebrata</taxon>
        <taxon>Euteleostomi</taxon>
        <taxon>Lepidosauria</taxon>
        <taxon>Sphenodontia</taxon>
        <taxon>Sphenodontidae</taxon>
        <taxon>Sphenodon</taxon>
    </lineage>
</organism>
<sequence length="141" mass="16272">VLTHEDCELLQQTWEKVLGHQEDFGAEALERMFITYPQTKTYFPHFDLHHGSEQIRNHGRKVVNALGEAVKNMDHMSTASGELSNLHAYNLRVDPVNFKLLSECFEVVLAVHLKDQYTPDVHRAYDKFLSAVGDMLAEKYR</sequence>